<reference key="1">
    <citation type="journal article" date="2008" name="BMC Genomics">
        <title>The genome sequence of the fish pathogen Aliivibrio salmonicida strain LFI1238 shows extensive evidence of gene decay.</title>
        <authorList>
            <person name="Hjerde E."/>
            <person name="Lorentzen M.S."/>
            <person name="Holden M.T."/>
            <person name="Seeger K."/>
            <person name="Paulsen S."/>
            <person name="Bason N."/>
            <person name="Churcher C."/>
            <person name="Harris D."/>
            <person name="Norbertczak H."/>
            <person name="Quail M.A."/>
            <person name="Sanders S."/>
            <person name="Thurston S."/>
            <person name="Parkhill J."/>
            <person name="Willassen N.P."/>
            <person name="Thomson N.R."/>
        </authorList>
    </citation>
    <scope>NUCLEOTIDE SEQUENCE [LARGE SCALE GENOMIC DNA]</scope>
    <source>
        <strain>LFI1238</strain>
    </source>
</reference>
<sequence length="179" mass="20460">MLKPSDTWSWYYDNKAQSLMLDLGMDMVFCVNLSPKVLINSAFDDCKFSVDDASAYQMFVEHISYLPLSEPRKVELALNCVAARRFHKPMLPKSWFFETQGAGYYPEEGEIVSLKNDLGEGHFIIVENYECASMCMLVDMDAFALNPTKYMAFCEPIKVMNDRMAKMQVVNSSYYALVG</sequence>
<proteinExistence type="inferred from homology"/>
<protein>
    <recommendedName>
        <fullName evidence="1">Cell division protein ZapC</fullName>
    </recommendedName>
</protein>
<evidence type="ECO:0000255" key="1">
    <source>
        <dbReference type="HAMAP-Rule" id="MF_00906"/>
    </source>
</evidence>
<evidence type="ECO:0000305" key="2"/>
<accession>B6ELD2</accession>
<dbReference type="EMBL" id="FM178379">
    <property type="protein sequence ID" value="CAQ79235.1"/>
    <property type="status" value="ALT_INIT"/>
    <property type="molecule type" value="Genomic_DNA"/>
</dbReference>
<dbReference type="RefSeq" id="WP_044583251.1">
    <property type="nucleotide sequence ID" value="NC_011312.1"/>
</dbReference>
<dbReference type="SMR" id="B6ELD2"/>
<dbReference type="KEGG" id="vsa:VSAL_I1550"/>
<dbReference type="eggNOG" id="ENOG502Z8AH">
    <property type="taxonomic scope" value="Bacteria"/>
</dbReference>
<dbReference type="HOGENOM" id="CLU_128248_0_0_6"/>
<dbReference type="Proteomes" id="UP000001730">
    <property type="component" value="Chromosome 1"/>
</dbReference>
<dbReference type="GO" id="GO:0005737">
    <property type="term" value="C:cytoplasm"/>
    <property type="evidence" value="ECO:0007669"/>
    <property type="project" value="UniProtKB-SubCell"/>
</dbReference>
<dbReference type="GO" id="GO:0000917">
    <property type="term" value="P:division septum assembly"/>
    <property type="evidence" value="ECO:0007669"/>
    <property type="project" value="UniProtKB-KW"/>
</dbReference>
<dbReference type="GO" id="GO:0043093">
    <property type="term" value="P:FtsZ-dependent cytokinesis"/>
    <property type="evidence" value="ECO:0007669"/>
    <property type="project" value="UniProtKB-UniRule"/>
</dbReference>
<dbReference type="HAMAP" id="MF_00906">
    <property type="entry name" value="ZapC"/>
    <property type="match status" value="1"/>
</dbReference>
<dbReference type="InterPro" id="IPR009809">
    <property type="entry name" value="ZapC"/>
</dbReference>
<dbReference type="InterPro" id="IPR048372">
    <property type="entry name" value="ZapC_C"/>
</dbReference>
<dbReference type="InterPro" id="IPR048373">
    <property type="entry name" value="ZapC_N"/>
</dbReference>
<dbReference type="Pfam" id="PF07126">
    <property type="entry name" value="ZapC_C"/>
    <property type="match status" value="1"/>
</dbReference>
<dbReference type="Pfam" id="PF21083">
    <property type="entry name" value="ZapC_N"/>
    <property type="match status" value="1"/>
</dbReference>
<dbReference type="PIRSF" id="PIRSF010252">
    <property type="entry name" value="ZapC"/>
    <property type="match status" value="1"/>
</dbReference>
<name>ZAPC_ALISL</name>
<comment type="function">
    <text evidence="1">Contributes to the efficiency of the cell division process by stabilizing the polymeric form of the cell division protein FtsZ. Acts by promoting interactions between FtsZ protofilaments and suppressing the GTPase activity of FtsZ.</text>
</comment>
<comment type="subunit">
    <text evidence="1">Interacts directly with FtsZ.</text>
</comment>
<comment type="subcellular location">
    <subcellularLocation>
        <location evidence="1">Cytoplasm</location>
    </subcellularLocation>
</comment>
<comment type="similarity">
    <text evidence="1">Belongs to the ZapC family.</text>
</comment>
<comment type="sequence caution" evidence="2">
    <conflict type="erroneous initiation">
        <sequence resource="EMBL-CDS" id="CAQ79235"/>
    </conflict>
    <text>Extended N-terminus.</text>
</comment>
<feature type="chain" id="PRO_0000413775" description="Cell division protein ZapC">
    <location>
        <begin position="1"/>
        <end position="179"/>
    </location>
</feature>
<gene>
    <name evidence="1" type="primary">zapC</name>
    <name type="ordered locus">VSAL_I1550</name>
</gene>
<organism>
    <name type="scientific">Aliivibrio salmonicida (strain LFI1238)</name>
    <name type="common">Vibrio salmonicida (strain LFI1238)</name>
    <dbReference type="NCBI Taxonomy" id="316275"/>
    <lineage>
        <taxon>Bacteria</taxon>
        <taxon>Pseudomonadati</taxon>
        <taxon>Pseudomonadota</taxon>
        <taxon>Gammaproteobacteria</taxon>
        <taxon>Vibrionales</taxon>
        <taxon>Vibrionaceae</taxon>
        <taxon>Aliivibrio</taxon>
    </lineage>
</organism>
<keyword id="KW-0131">Cell cycle</keyword>
<keyword id="KW-0132">Cell division</keyword>
<keyword id="KW-0963">Cytoplasm</keyword>
<keyword id="KW-0717">Septation</keyword>